<evidence type="ECO:0000255" key="1"/>
<evidence type="ECO:0000256" key="2">
    <source>
        <dbReference type="SAM" id="MobiDB-lite"/>
    </source>
</evidence>
<evidence type="ECO:0000269" key="3">
    <source>
    </source>
</evidence>
<evidence type="ECO:0000269" key="4">
    <source ref="1"/>
</evidence>
<evidence type="ECO:0000305" key="5"/>
<organism>
    <name type="scientific">Lottia gigantea</name>
    <name type="common">Giant owl limpet</name>
    <dbReference type="NCBI Taxonomy" id="225164"/>
    <lineage>
        <taxon>Eukaryota</taxon>
        <taxon>Metazoa</taxon>
        <taxon>Spiralia</taxon>
        <taxon>Lophotrochozoa</taxon>
        <taxon>Mollusca</taxon>
        <taxon>Gastropoda</taxon>
        <taxon>Patellogastropoda</taxon>
        <taxon>Lottioidea</taxon>
        <taxon>Lottiidae</taxon>
        <taxon>Lottia</taxon>
    </lineage>
</organism>
<feature type="chain" id="PRO_0000415245" description="Aspartate, glycine, lysine and serine-rich protein">
    <location>
        <begin position="1"/>
        <end position="977"/>
    </location>
</feature>
<feature type="region of interest" description="Disordered" evidence="2">
    <location>
        <begin position="23"/>
        <end position="116"/>
    </location>
</feature>
<feature type="region of interest" description="Disordered" evidence="2">
    <location>
        <begin position="246"/>
        <end position="767"/>
    </location>
</feature>
<feature type="region of interest" description="Disordered" evidence="2">
    <location>
        <begin position="780"/>
        <end position="922"/>
    </location>
</feature>
<feature type="compositionally biased region" description="Basic and acidic residues" evidence="2">
    <location>
        <begin position="37"/>
        <end position="50"/>
    </location>
</feature>
<feature type="compositionally biased region" description="Polar residues" evidence="2">
    <location>
        <begin position="51"/>
        <end position="63"/>
    </location>
</feature>
<feature type="compositionally biased region" description="Low complexity" evidence="2">
    <location>
        <begin position="251"/>
        <end position="278"/>
    </location>
</feature>
<feature type="compositionally biased region" description="Polar residues" evidence="2">
    <location>
        <begin position="309"/>
        <end position="325"/>
    </location>
</feature>
<feature type="compositionally biased region" description="Acidic residues" evidence="2">
    <location>
        <begin position="410"/>
        <end position="427"/>
    </location>
</feature>
<feature type="compositionally biased region" description="Gly residues" evidence="2">
    <location>
        <begin position="428"/>
        <end position="443"/>
    </location>
</feature>
<feature type="compositionally biased region" description="Basic residues" evidence="2">
    <location>
        <begin position="447"/>
        <end position="457"/>
    </location>
</feature>
<feature type="compositionally biased region" description="Basic residues" evidence="2">
    <location>
        <begin position="465"/>
        <end position="540"/>
    </location>
</feature>
<feature type="compositionally biased region" description="Basic and acidic residues" evidence="2">
    <location>
        <begin position="541"/>
        <end position="557"/>
    </location>
</feature>
<feature type="compositionally biased region" description="Low complexity" evidence="2">
    <location>
        <begin position="572"/>
        <end position="583"/>
    </location>
</feature>
<feature type="compositionally biased region" description="Gly residues" evidence="2">
    <location>
        <begin position="591"/>
        <end position="643"/>
    </location>
</feature>
<feature type="compositionally biased region" description="Basic and acidic residues" evidence="2">
    <location>
        <begin position="660"/>
        <end position="675"/>
    </location>
</feature>
<feature type="compositionally biased region" description="Low complexity" evidence="2">
    <location>
        <begin position="700"/>
        <end position="724"/>
    </location>
</feature>
<feature type="compositionally biased region" description="Polar residues" evidence="2">
    <location>
        <begin position="730"/>
        <end position="744"/>
    </location>
</feature>
<feature type="compositionally biased region" description="Polar residues" evidence="2">
    <location>
        <begin position="758"/>
        <end position="767"/>
    </location>
</feature>
<feature type="compositionally biased region" description="Polar residues" evidence="2">
    <location>
        <begin position="785"/>
        <end position="801"/>
    </location>
</feature>
<feature type="compositionally biased region" description="Low complexity" evidence="2">
    <location>
        <begin position="803"/>
        <end position="814"/>
    </location>
</feature>
<feature type="compositionally biased region" description="Low complexity" evidence="2">
    <location>
        <begin position="822"/>
        <end position="857"/>
    </location>
</feature>
<feature type="compositionally biased region" description="Low complexity" evidence="2">
    <location>
        <begin position="870"/>
        <end position="907"/>
    </location>
</feature>
<feature type="glycosylation site" description="N-linked (GlcNAc...) asparagine" evidence="1">
    <location>
        <position position="136"/>
    </location>
</feature>
<feature type="non-consecutive residues" evidence="5">
    <location>
        <begin position="444"/>
        <end position="445"/>
    </location>
</feature>
<feature type="non-terminal residue" evidence="5">
    <location>
        <position position="1"/>
    </location>
</feature>
<protein>
    <recommendedName>
        <fullName>Aspartate, glycine, lysine and serine-rich protein</fullName>
    </recommendedName>
</protein>
<name>DGLSP_LOTGI</name>
<accession>B3A0P1</accession>
<proteinExistence type="evidence at protein level"/>
<keyword id="KW-0903">Direct protein sequencing</keyword>
<keyword id="KW-0325">Glycoprotein</keyword>
<keyword id="KW-0964">Secreted</keyword>
<comment type="subcellular location">
    <subcellularLocation>
        <location evidence="3">Secreted</location>
    </subcellularLocation>
</comment>
<comment type="tissue specificity">
    <text evidence="3">Component of the acid-insoluble and acid-soluble organic matrix of calcified layers of the shell (at protein level).</text>
</comment>
<sequence length="977" mass="96357">SFYDYEFESTFEYSSEINSIVDGVLPDVDSGFPTDTEETKSEPKQPDTKPEQPSVSKPDSSVNGIVPGVSEPKPKQPSGSKPDGSAPGLKPGGGKPEGGIKPEPQVPITNLGSSTSQSSSYISITNLYDILSIIFNLSHIGGTGKGYTDRVSGGVGIGASGGAGGVGGAGGVGGAGGVGGAGGAGGADGASVGAGGGADGGAYGGGYGAGYGGADGGADGGADGGGYGGADGGVGAGGYGGAGGGAGGGDYYSDSSDSSDSDSSGSDSSESGSSESGSYYTGYNNDGSLGDNGRGSSGHRYSDHGSPGNGSPDNGTPGSGSSRYTFSDDGSLAYKSQDNGTPGRKATNYRFSDDGSLAYGAQDNGKPGSGSPRYRYSDDGSLGNGFPDNGASVGISPSIESPGGPVLGSLEDELLGSDSSDEDDIDDGLGGLGLGAGPGGPGGFVKTPKHKPRTDKKKKPDDKPKRKPKTSRKPKTSRKPKTSRKPKTSRKSKTSRKTKTSRKSKRKSTRKTTRKSSRKVSRKTSRKPRRKITRRPVQRKQPREYKQESPEVEREHSAPSTTNVEIYRDIIKILITSLTSSRGDNGKSGDDGSGSGNGGGDDGNGGGAGNGGGAGNGGGAGNGGGAGNGGGNGGGGNGGGGNDNGNDNGNDDCHYDDDDEHRNRCEDDDDYREKCCDDDESGGSGNFDLSSILKLMQGQSGSSSSSSATESESSSTSTTPSTSSLDLSAILSTLSGRSQKTRSGSALDISSLLGVTGSRPSVATSRGSGLDLSAVLSALGGGKPSTGTTVTSKPSTGTSSAPGLDLSGLLGQLGPILSGLLGPKPDSKPSTGSPSTTSKPSTGSSSGPGLDLSGLLGNLAPVLSALTGGKKPTASSKPTAPSTPSKSTGSSPGKGLDLSGLLGKLSPAPKPKAPKPSIGSGLLPGLDLSSILGKLSGGKKPISGSGKGSKGSSRFCRCALSCSCKSIDYGCVNIGCK</sequence>
<dbReference type="EMBL" id="FC572434">
    <property type="status" value="NOT_ANNOTATED_CDS"/>
    <property type="molecule type" value="mRNA"/>
</dbReference>
<dbReference type="EMBL" id="FC572435">
    <property type="status" value="NOT_ANNOTATED_CDS"/>
    <property type="molecule type" value="mRNA"/>
</dbReference>
<dbReference type="EMBL" id="FC624061">
    <property type="status" value="NOT_ANNOTATED_CDS"/>
    <property type="molecule type" value="mRNA"/>
</dbReference>
<dbReference type="EMBL" id="FC625878">
    <property type="status" value="NOT_ANNOTATED_CDS"/>
    <property type="molecule type" value="mRNA"/>
</dbReference>
<dbReference type="EMBL" id="FC639805">
    <property type="status" value="NOT_ANNOTATED_CDS"/>
    <property type="molecule type" value="mRNA"/>
</dbReference>
<dbReference type="GO" id="GO:0005576">
    <property type="term" value="C:extracellular region"/>
    <property type="evidence" value="ECO:0007669"/>
    <property type="project" value="UniProtKB-SubCell"/>
</dbReference>
<reference evidence="5" key="1">
    <citation type="submission" date="2007-12" db="EMBL/GenBank/DDBJ databases">
        <title>DOE Joint Genome Institute Lottia gigantea EST project.</title>
        <authorList>
            <person name="Richardson P."/>
            <person name="Lucas S."/>
            <person name="Rokhsar D."/>
            <person name="Wang M."/>
            <person name="Lindquist E.A."/>
        </authorList>
    </citation>
    <scope>NUCLEOTIDE SEQUENCE [LARGE SCALE MRNA]</scope>
    <scope>IDENTIFICATION</scope>
    <source>
        <tissue evidence="4">Foot</tissue>
        <tissue evidence="4">Gonad</tissue>
        <tissue evidence="4">Mantle</tissue>
    </source>
</reference>
<reference key="2">
    <citation type="journal article" date="2013" name="FEBS J.">
        <title>The shell-forming proteome of Lottia gigantea reveals both deep conservations and lineage-specific novelties.</title>
        <authorList>
            <person name="Marie B."/>
            <person name="Jackson D.J."/>
            <person name="Ramos-Silva P."/>
            <person name="Zanella-Cleon I."/>
            <person name="Guichard N."/>
            <person name="Marin F."/>
        </authorList>
    </citation>
    <scope>PROTEIN SEQUENCE OF 301-335; 351-373; 544-568; 573-582; 675-694; 743-766; 871-886; 905-947 AND 958-965</scope>
    <scope>SUBCELLULAR LOCATION</scope>
    <scope>TISSUE SPECIFICITY</scope>
    <source>
        <tissue>Shell</tissue>
    </source>
</reference>